<geneLocation type="plasmid">
    <name>pB171</name>
</geneLocation>
<feature type="signal peptide" evidence="2">
    <location>
        <begin position="1"/>
        <end position="17"/>
    </location>
</feature>
<feature type="chain" id="PRO_0000020806" description="Outer membrane lipoprotein BfpB">
    <location>
        <begin position="18"/>
        <end position="552"/>
    </location>
</feature>
<feature type="region of interest" description="Disordered" evidence="1">
    <location>
        <begin position="218"/>
        <end position="244"/>
    </location>
</feature>
<feature type="compositionally biased region" description="Low complexity" evidence="1">
    <location>
        <begin position="218"/>
        <end position="243"/>
    </location>
</feature>
<feature type="lipid moiety-binding region" description="N-palmitoyl cysteine" evidence="2">
    <location>
        <position position="18"/>
    </location>
</feature>
<feature type="lipid moiety-binding region" description="S-diacylglycerol cysteine" evidence="2">
    <location>
        <position position="18"/>
    </location>
</feature>
<feature type="sequence conflict" description="In Ref. 1; AAC44041." evidence="2" ref="1">
    <original>LLKH</original>
    <variation>FVND</variation>
    <location>
        <begin position="332"/>
        <end position="335"/>
    </location>
</feature>
<reference key="1">
    <citation type="journal article" date="1996" name="J. Bacteriol.">
        <title>Enteropathogenic Escherichia coli: identification of a gene cluster coding for bundle-forming pilus morphogenesis.</title>
        <authorList>
            <person name="Sohel I."/>
            <person name="Puente J.L."/>
            <person name="Ramer S.W."/>
            <person name="Bieber D."/>
            <person name="Wu C.-Y."/>
            <person name="Schoolnik G.K."/>
        </authorList>
    </citation>
    <scope>NUCLEOTIDE SEQUENCE [GENOMIC DNA]</scope>
    <source>
        <strain>O111:H- / B171 / EPEC</strain>
    </source>
</reference>
<reference key="2">
    <citation type="journal article" date="1999" name="Infect. Immun.">
        <title>Complete DNA sequence and structural analysis of the enteropathogenic Escherichia coli adherence factor plasmid.</title>
        <authorList>
            <person name="Tobe T."/>
            <person name="Hayashi T."/>
            <person name="Han C.-G."/>
            <person name="Schoolnik G.K."/>
            <person name="Ohtsubo E."/>
            <person name="Sasakawa C."/>
        </authorList>
    </citation>
    <scope>NUCLEOTIDE SEQUENCE [GENOMIC DNA]</scope>
    <source>
        <strain>O111:H- / B171 / EPEC</strain>
    </source>
</reference>
<reference key="3">
    <citation type="journal article" date="1996" name="J. Bacteriol.">
        <title>BfpB, an outer membrane lipoprotein required for the biogenesis of bundle-forming pili in enteropathogenic Escherichia coli.</title>
        <authorList>
            <person name="Ramer S.W."/>
            <person name="Bieber D."/>
            <person name="Schoolnik G.K."/>
        </authorList>
    </citation>
    <scope>CHARACTERIZATION</scope>
    <source>
        <strain>O111:H- / B171 / EPEC</strain>
    </source>
</reference>
<name>BFPB_ECO11</name>
<comment type="function">
    <text>Is absolutely required for pilus biogenesis, and for EPEC localized adherence and autoaggregation. Acts at a step in the BFP biogenic pathway after production and processing of the structural pilus subunit BfpA.</text>
</comment>
<comment type="subcellular location">
    <subcellularLocation>
        <location>Cell outer membrane</location>
        <topology>Lipid-anchor</topology>
    </subcellularLocation>
</comment>
<comment type="induction">
    <text>During exponential-phase growth; repressed by ammonium.</text>
</comment>
<comment type="similarity">
    <text evidence="2">Belongs to the bacterial secretin family.</text>
</comment>
<dbReference type="EMBL" id="U27184">
    <property type="protein sequence ID" value="AAC44041.1"/>
    <property type="molecule type" value="Genomic_DNA"/>
</dbReference>
<dbReference type="EMBL" id="AB024946">
    <property type="protein sequence ID" value="BAA84840.1"/>
    <property type="molecule type" value="Genomic_DNA"/>
</dbReference>
<dbReference type="TCDB" id="1.B.22.7.1">
    <property type="family name" value="the outer bacterial membrane secretin (secretin) family"/>
</dbReference>
<dbReference type="GO" id="GO:0009279">
    <property type="term" value="C:cell outer membrane"/>
    <property type="evidence" value="ECO:0007669"/>
    <property type="project" value="UniProtKB-SubCell"/>
</dbReference>
<dbReference type="GO" id="GO:0009297">
    <property type="term" value="P:pilus assembly"/>
    <property type="evidence" value="ECO:0007669"/>
    <property type="project" value="InterPro"/>
</dbReference>
<dbReference type="GO" id="GO:0009306">
    <property type="term" value="P:protein secretion"/>
    <property type="evidence" value="ECO:0007669"/>
    <property type="project" value="InterPro"/>
</dbReference>
<dbReference type="InterPro" id="IPR050810">
    <property type="entry name" value="Bact_Secretion_Sys_Channel"/>
</dbReference>
<dbReference type="InterPro" id="IPR011514">
    <property type="entry name" value="Secretin_N_2"/>
</dbReference>
<dbReference type="InterPro" id="IPR004846">
    <property type="entry name" value="T2SS/T3SS_dom"/>
</dbReference>
<dbReference type="PANTHER" id="PTHR30332">
    <property type="entry name" value="PROBABLE GENERAL SECRETION PATHWAY PROTEIN D"/>
    <property type="match status" value="1"/>
</dbReference>
<dbReference type="PANTHER" id="PTHR30332:SF24">
    <property type="entry name" value="SECRETIN GSPD-RELATED"/>
    <property type="match status" value="1"/>
</dbReference>
<dbReference type="Pfam" id="PF00263">
    <property type="entry name" value="Secretin"/>
    <property type="match status" value="1"/>
</dbReference>
<dbReference type="Pfam" id="PF07655">
    <property type="entry name" value="Secretin_N_2"/>
    <property type="match status" value="1"/>
</dbReference>
<dbReference type="PROSITE" id="PS51257">
    <property type="entry name" value="PROKAR_LIPOPROTEIN"/>
    <property type="match status" value="1"/>
</dbReference>
<keyword id="KW-0998">Cell outer membrane</keyword>
<keyword id="KW-1029">Fimbrium biogenesis</keyword>
<keyword id="KW-0449">Lipoprotein</keyword>
<keyword id="KW-0472">Membrane</keyword>
<keyword id="KW-0564">Palmitate</keyword>
<keyword id="KW-0614">Plasmid</keyword>
<keyword id="KW-0732">Signal</keyword>
<evidence type="ECO:0000256" key="1">
    <source>
        <dbReference type="SAM" id="MobiDB-lite"/>
    </source>
</evidence>
<evidence type="ECO:0000305" key="2"/>
<protein>
    <recommendedName>
        <fullName>Outer membrane lipoprotein BfpB</fullName>
    </recommendedName>
    <alternativeName>
        <fullName>Bundle-forming pilus B</fullName>
    </alternativeName>
</protein>
<sequence>MKLGRYSLFLLCPLLASCSGNGFYKDNLGVIDKNILHADTSLLKSKNKEHYKSSDMVSKTDSIYIGNSSFQTYHGEPLPGKLEGVHGIILRSSTPLGFDEVLSMIQDSSGIPIVKHTTKDVISGGVSSKSLAATVAEKMNSATGGKSTDQFDHLLLEVSSEHQLMDVNYQGALSTFLDKVAANYNLYWTYESGRIAFSNEETKRFSISILPGGKYTSKNSISSDSNSSSGSSGSSGSSSSDSGAELKFDSDVDFWKDIENSIKLILGSDGSYSISTSTSSVIVRTSSANMKKINEYINTLNAQLERQVTIDVAIYNVTTTDSSDLAMSLEALLKHNGGVLGSVSTSNFAATSGTPSFTGYLNGNGDSSNQVLLNLLAEKGKVSVVTSASVTTMSGQPVPLKVGNDRTYVSEIGTVLSQSSTSTTASTSTVTSGFLMNLLPQVADDGNILLQYGVTLSELVGSNNGFDQATVNGTVIQLPNVDSTTFVQSSMLRNGNTLVLAGYEKKRNESVDQGVGTTSFKLLGGALNGSASRTVTVICITPRIIDLKASGE</sequence>
<organism>
    <name type="scientific">Escherichia coli O111:H-</name>
    <dbReference type="NCBI Taxonomy" id="168927"/>
    <lineage>
        <taxon>Bacteria</taxon>
        <taxon>Pseudomonadati</taxon>
        <taxon>Pseudomonadota</taxon>
        <taxon>Gammaproteobacteria</taxon>
        <taxon>Enterobacterales</taxon>
        <taxon>Enterobacteriaceae</taxon>
        <taxon>Escherichia</taxon>
    </lineage>
</organism>
<gene>
    <name type="primary">bfpB</name>
</gene>
<proteinExistence type="evidence at protein level"/>
<accession>Q9S142</accession>
<accession>Q46777</accession>